<keyword id="KW-0067">ATP-binding</keyword>
<keyword id="KW-0997">Cell inner membrane</keyword>
<keyword id="KW-1003">Cell membrane</keyword>
<keyword id="KW-0963">Cytoplasm</keyword>
<keyword id="KW-0472">Membrane</keyword>
<keyword id="KW-0479">Metal-binding</keyword>
<keyword id="KW-0547">Nucleotide-binding</keyword>
<keyword id="KW-0653">Protein transport</keyword>
<keyword id="KW-1185">Reference proteome</keyword>
<keyword id="KW-1278">Translocase</keyword>
<keyword id="KW-0811">Translocation</keyword>
<keyword id="KW-0813">Transport</keyword>
<keyword id="KW-0862">Zinc</keyword>
<reference key="1">
    <citation type="journal article" date="2010" name="J. Bacteriol.">
        <title>Complete genome sequence of the aerobic facultative methanotroph Methylocella silvestris BL2.</title>
        <authorList>
            <person name="Chen Y."/>
            <person name="Crombie A."/>
            <person name="Rahman M.T."/>
            <person name="Dedysh S.N."/>
            <person name="Liesack W."/>
            <person name="Stott M.B."/>
            <person name="Alam M."/>
            <person name="Theisen A.R."/>
            <person name="Murrell J.C."/>
            <person name="Dunfield P.F."/>
        </authorList>
    </citation>
    <scope>NUCLEOTIDE SEQUENCE [LARGE SCALE GENOMIC DNA]</scope>
    <source>
        <strain>DSM 15510 / CIP 108128 / LMG 27833 / NCIMB 13906 / BL2</strain>
    </source>
</reference>
<protein>
    <recommendedName>
        <fullName evidence="1">Protein translocase subunit SecA</fullName>
        <ecNumber evidence="1">7.4.2.8</ecNumber>
    </recommendedName>
</protein>
<evidence type="ECO:0000255" key="1">
    <source>
        <dbReference type="HAMAP-Rule" id="MF_01382"/>
    </source>
</evidence>
<evidence type="ECO:0000256" key="2">
    <source>
        <dbReference type="SAM" id="MobiDB-lite"/>
    </source>
</evidence>
<accession>B8EM60</accession>
<name>SECA_METSB</name>
<organism>
    <name type="scientific">Methylocella silvestris (strain DSM 15510 / CIP 108128 / LMG 27833 / NCIMB 13906 / BL2)</name>
    <dbReference type="NCBI Taxonomy" id="395965"/>
    <lineage>
        <taxon>Bacteria</taxon>
        <taxon>Pseudomonadati</taxon>
        <taxon>Pseudomonadota</taxon>
        <taxon>Alphaproteobacteria</taxon>
        <taxon>Hyphomicrobiales</taxon>
        <taxon>Beijerinckiaceae</taxon>
        <taxon>Methylocella</taxon>
    </lineage>
</organism>
<sequence>MLGSFAKKIFGSANERRLKSYRPKVAAINALEPEWLKLSNEELAAKTVAFREELAQGKSLDDLLVPAFATVREAARRVLGQRHFDVQLIGGMVLHEGAIAEMRTGEGKTLVATLATYLNALAGKGVHVITVNDYLARRDAEWMGRVYQFLGLTTGIIVHGVDDGERARSYAADITYGTNNEFGFDYLRDNMKYELSQMVQRGHSFAIVDEVDSILIDEARTPLIISGPSDDKSELYNTIDKVMPRLQPEDFEVDEKQRSTNLTERGNEHIEDLLRAAGVEIEGSLYEAANVTIVHHVNQALRAHKLFQRDKDYIVRNGEVVIIDEFTGRMMPGRRYSEGLHQALEAKEHVQVQPENVTLASITFQNYFRLYSKLAGMTGTASTEADEFAEIYKLDVVDIPTNLPVCRLDEDDEVYRSAEEKLRAIVREIEAANAKMQPMLVGTTSIEKSEQLAEAMKSHGYKQIDFAEPRALDKLYAAARAEKPSKLFAVLNARFHEQEAYIVAEAGVPGAITIATNMAGRGTDIKLGGNVDMRVAQECADLEPGEARDAKDAQIRAEVDDFKAKAIAAGGLYIIGTERHESRRIDNQLRGRAGRQGDPGRSKFFLSLKDDLMRIFGSDRMESMLVKLGLKEDEAIVHSWINKALEKAQQKVEARNFDMRKNILKYDNVMNDQRKVVFEQRREMMAKPSLEEMIDDMRQGVVDDLIARHIPRDAYPEAWDSEGLREGVKTSLNIDLPIVEWAKEEGITEDDMRERLQKAADEAYAARVERNGVDVTRYVEKQIVLQALDHLWREHLLTLDHLRQVVGWRGMAQRDPLNEYKSEAFQLFDELIAQLREATTAQLSRVEVAFEPPPGENGFSGGMQEISGPQGGSSGGPIFQEALSAAAFAPPPLAPLEFSDESGSTATLARPAQSASRDEPAGGYAKVGRNQPCPCGSGKKYKHCHGALT</sequence>
<gene>
    <name evidence="1" type="primary">secA</name>
    <name type="ordered locus">Msil_2525</name>
</gene>
<comment type="function">
    <text evidence="1">Part of the Sec protein translocase complex. Interacts with the SecYEG preprotein conducting channel. Has a central role in coupling the hydrolysis of ATP to the transfer of proteins into and across the cell membrane, serving both as a receptor for the preprotein-SecB complex and as an ATP-driven molecular motor driving the stepwise translocation of polypeptide chains across the membrane.</text>
</comment>
<comment type="catalytic activity">
    <reaction evidence="1">
        <text>ATP + H2O + cellular proteinSide 1 = ADP + phosphate + cellular proteinSide 2.</text>
        <dbReference type="EC" id="7.4.2.8"/>
    </reaction>
</comment>
<comment type="cofactor">
    <cofactor evidence="1">
        <name>Zn(2+)</name>
        <dbReference type="ChEBI" id="CHEBI:29105"/>
    </cofactor>
    <text evidence="1">May bind 1 zinc ion per subunit.</text>
</comment>
<comment type="subunit">
    <text evidence="1">Monomer and homodimer. Part of the essential Sec protein translocation apparatus which comprises SecA, SecYEG and auxiliary proteins SecDF-YajC and YidC.</text>
</comment>
<comment type="subcellular location">
    <subcellularLocation>
        <location evidence="1">Cell inner membrane</location>
        <topology evidence="1">Peripheral membrane protein</topology>
        <orientation evidence="1">Cytoplasmic side</orientation>
    </subcellularLocation>
    <subcellularLocation>
        <location evidence="1">Cytoplasm</location>
    </subcellularLocation>
    <text evidence="1">Distribution is 50-50.</text>
</comment>
<comment type="similarity">
    <text evidence="1">Belongs to the SecA family.</text>
</comment>
<feature type="chain" id="PRO_1000184240" description="Protein translocase subunit SecA">
    <location>
        <begin position="1"/>
        <end position="949"/>
    </location>
</feature>
<feature type="region of interest" description="Disordered" evidence="2">
    <location>
        <begin position="852"/>
        <end position="876"/>
    </location>
</feature>
<feature type="region of interest" description="Disordered" evidence="2">
    <location>
        <begin position="896"/>
        <end position="939"/>
    </location>
</feature>
<feature type="binding site" evidence="1">
    <location>
        <position position="87"/>
    </location>
    <ligand>
        <name>ATP</name>
        <dbReference type="ChEBI" id="CHEBI:30616"/>
    </ligand>
</feature>
<feature type="binding site" evidence="1">
    <location>
        <begin position="105"/>
        <end position="109"/>
    </location>
    <ligand>
        <name>ATP</name>
        <dbReference type="ChEBI" id="CHEBI:30616"/>
    </ligand>
</feature>
<feature type="binding site" evidence="1">
    <location>
        <position position="524"/>
    </location>
    <ligand>
        <name>ATP</name>
        <dbReference type="ChEBI" id="CHEBI:30616"/>
    </ligand>
</feature>
<feature type="binding site" evidence="1">
    <location>
        <position position="933"/>
    </location>
    <ligand>
        <name>Zn(2+)</name>
        <dbReference type="ChEBI" id="CHEBI:29105"/>
    </ligand>
</feature>
<feature type="binding site" evidence="1">
    <location>
        <position position="935"/>
    </location>
    <ligand>
        <name>Zn(2+)</name>
        <dbReference type="ChEBI" id="CHEBI:29105"/>
    </ligand>
</feature>
<feature type="binding site" evidence="1">
    <location>
        <position position="944"/>
    </location>
    <ligand>
        <name>Zn(2+)</name>
        <dbReference type="ChEBI" id="CHEBI:29105"/>
    </ligand>
</feature>
<feature type="binding site" evidence="1">
    <location>
        <position position="945"/>
    </location>
    <ligand>
        <name>Zn(2+)</name>
        <dbReference type="ChEBI" id="CHEBI:29105"/>
    </ligand>
</feature>
<proteinExistence type="inferred from homology"/>
<dbReference type="EC" id="7.4.2.8" evidence="1"/>
<dbReference type="EMBL" id="CP001280">
    <property type="protein sequence ID" value="ACK51449.1"/>
    <property type="molecule type" value="Genomic_DNA"/>
</dbReference>
<dbReference type="RefSeq" id="WP_012591518.1">
    <property type="nucleotide sequence ID" value="NC_011666.1"/>
</dbReference>
<dbReference type="SMR" id="B8EM60"/>
<dbReference type="STRING" id="395965.Msil_2525"/>
<dbReference type="KEGG" id="msl:Msil_2525"/>
<dbReference type="eggNOG" id="COG0653">
    <property type="taxonomic scope" value="Bacteria"/>
</dbReference>
<dbReference type="HOGENOM" id="CLU_005314_3_0_5"/>
<dbReference type="OrthoDB" id="9805579at2"/>
<dbReference type="Proteomes" id="UP000002257">
    <property type="component" value="Chromosome"/>
</dbReference>
<dbReference type="GO" id="GO:0031522">
    <property type="term" value="C:cell envelope Sec protein transport complex"/>
    <property type="evidence" value="ECO:0007669"/>
    <property type="project" value="TreeGrafter"/>
</dbReference>
<dbReference type="GO" id="GO:0005829">
    <property type="term" value="C:cytosol"/>
    <property type="evidence" value="ECO:0007669"/>
    <property type="project" value="TreeGrafter"/>
</dbReference>
<dbReference type="GO" id="GO:0005886">
    <property type="term" value="C:plasma membrane"/>
    <property type="evidence" value="ECO:0007669"/>
    <property type="project" value="UniProtKB-SubCell"/>
</dbReference>
<dbReference type="GO" id="GO:0005524">
    <property type="term" value="F:ATP binding"/>
    <property type="evidence" value="ECO:0007669"/>
    <property type="project" value="UniProtKB-UniRule"/>
</dbReference>
<dbReference type="GO" id="GO:0046872">
    <property type="term" value="F:metal ion binding"/>
    <property type="evidence" value="ECO:0007669"/>
    <property type="project" value="UniProtKB-KW"/>
</dbReference>
<dbReference type="GO" id="GO:0008564">
    <property type="term" value="F:protein-exporting ATPase activity"/>
    <property type="evidence" value="ECO:0007669"/>
    <property type="project" value="UniProtKB-EC"/>
</dbReference>
<dbReference type="GO" id="GO:0065002">
    <property type="term" value="P:intracellular protein transmembrane transport"/>
    <property type="evidence" value="ECO:0007669"/>
    <property type="project" value="UniProtKB-UniRule"/>
</dbReference>
<dbReference type="GO" id="GO:0017038">
    <property type="term" value="P:protein import"/>
    <property type="evidence" value="ECO:0007669"/>
    <property type="project" value="InterPro"/>
</dbReference>
<dbReference type="GO" id="GO:0006605">
    <property type="term" value="P:protein targeting"/>
    <property type="evidence" value="ECO:0007669"/>
    <property type="project" value="UniProtKB-UniRule"/>
</dbReference>
<dbReference type="GO" id="GO:0043952">
    <property type="term" value="P:protein transport by the Sec complex"/>
    <property type="evidence" value="ECO:0007669"/>
    <property type="project" value="TreeGrafter"/>
</dbReference>
<dbReference type="CDD" id="cd17928">
    <property type="entry name" value="DEXDc_SecA"/>
    <property type="match status" value="1"/>
</dbReference>
<dbReference type="CDD" id="cd18803">
    <property type="entry name" value="SF2_C_secA"/>
    <property type="match status" value="1"/>
</dbReference>
<dbReference type="FunFam" id="3.90.1440.10:FF:000001">
    <property type="entry name" value="Preprotein translocase subunit SecA"/>
    <property type="match status" value="1"/>
</dbReference>
<dbReference type="FunFam" id="1.10.3060.10:FF:000003">
    <property type="entry name" value="Protein translocase subunit SecA"/>
    <property type="match status" value="1"/>
</dbReference>
<dbReference type="FunFam" id="3.40.50.300:FF:000334">
    <property type="entry name" value="Protein translocase subunit SecA"/>
    <property type="match status" value="1"/>
</dbReference>
<dbReference type="FunFam" id="3.40.50.300:FF:001790">
    <property type="entry name" value="Protein translocase subunit SecA"/>
    <property type="match status" value="1"/>
</dbReference>
<dbReference type="Gene3D" id="3.10.450.50">
    <property type="match status" value="1"/>
</dbReference>
<dbReference type="Gene3D" id="1.10.3060.10">
    <property type="entry name" value="Helical scaffold and wing domains of SecA"/>
    <property type="match status" value="1"/>
</dbReference>
<dbReference type="Gene3D" id="3.40.50.300">
    <property type="entry name" value="P-loop containing nucleotide triphosphate hydrolases"/>
    <property type="match status" value="2"/>
</dbReference>
<dbReference type="Gene3D" id="3.90.1440.10">
    <property type="entry name" value="SecA, preprotein cross-linking domain"/>
    <property type="match status" value="1"/>
</dbReference>
<dbReference type="HAMAP" id="MF_01382">
    <property type="entry name" value="SecA"/>
    <property type="match status" value="1"/>
</dbReference>
<dbReference type="InterPro" id="IPR014001">
    <property type="entry name" value="Helicase_ATP-bd"/>
</dbReference>
<dbReference type="InterPro" id="IPR027417">
    <property type="entry name" value="P-loop_NTPase"/>
</dbReference>
<dbReference type="InterPro" id="IPR004027">
    <property type="entry name" value="SEC_C_motif"/>
</dbReference>
<dbReference type="InterPro" id="IPR000185">
    <property type="entry name" value="SecA"/>
</dbReference>
<dbReference type="InterPro" id="IPR020937">
    <property type="entry name" value="SecA_CS"/>
</dbReference>
<dbReference type="InterPro" id="IPR011115">
    <property type="entry name" value="SecA_DEAD"/>
</dbReference>
<dbReference type="InterPro" id="IPR014018">
    <property type="entry name" value="SecA_motor_DEAD"/>
</dbReference>
<dbReference type="InterPro" id="IPR011130">
    <property type="entry name" value="SecA_preprotein_X-link_dom"/>
</dbReference>
<dbReference type="InterPro" id="IPR044722">
    <property type="entry name" value="SecA_SF2_C"/>
</dbReference>
<dbReference type="InterPro" id="IPR011116">
    <property type="entry name" value="SecA_Wing/Scaffold"/>
</dbReference>
<dbReference type="InterPro" id="IPR036266">
    <property type="entry name" value="SecA_Wing/Scaffold_sf"/>
</dbReference>
<dbReference type="InterPro" id="IPR036670">
    <property type="entry name" value="SecA_X-link_sf"/>
</dbReference>
<dbReference type="NCBIfam" id="NF009538">
    <property type="entry name" value="PRK12904.1"/>
    <property type="match status" value="1"/>
</dbReference>
<dbReference type="NCBIfam" id="TIGR00963">
    <property type="entry name" value="secA"/>
    <property type="match status" value="1"/>
</dbReference>
<dbReference type="PANTHER" id="PTHR30612:SF0">
    <property type="entry name" value="CHLOROPLAST PROTEIN-TRANSPORTING ATPASE"/>
    <property type="match status" value="1"/>
</dbReference>
<dbReference type="PANTHER" id="PTHR30612">
    <property type="entry name" value="SECA INNER MEMBRANE COMPONENT OF SEC PROTEIN SECRETION SYSTEM"/>
    <property type="match status" value="1"/>
</dbReference>
<dbReference type="Pfam" id="PF21090">
    <property type="entry name" value="P-loop_SecA"/>
    <property type="match status" value="1"/>
</dbReference>
<dbReference type="Pfam" id="PF02810">
    <property type="entry name" value="SEC-C"/>
    <property type="match status" value="1"/>
</dbReference>
<dbReference type="Pfam" id="PF07517">
    <property type="entry name" value="SecA_DEAD"/>
    <property type="match status" value="1"/>
</dbReference>
<dbReference type="Pfam" id="PF01043">
    <property type="entry name" value="SecA_PP_bind"/>
    <property type="match status" value="1"/>
</dbReference>
<dbReference type="Pfam" id="PF07516">
    <property type="entry name" value="SecA_SW"/>
    <property type="match status" value="1"/>
</dbReference>
<dbReference type="PRINTS" id="PR00906">
    <property type="entry name" value="SECA"/>
</dbReference>
<dbReference type="SMART" id="SM00957">
    <property type="entry name" value="SecA_DEAD"/>
    <property type="match status" value="1"/>
</dbReference>
<dbReference type="SMART" id="SM00958">
    <property type="entry name" value="SecA_PP_bind"/>
    <property type="match status" value="1"/>
</dbReference>
<dbReference type="SUPFAM" id="SSF81886">
    <property type="entry name" value="Helical scaffold and wing domains of SecA"/>
    <property type="match status" value="1"/>
</dbReference>
<dbReference type="SUPFAM" id="SSF52540">
    <property type="entry name" value="P-loop containing nucleoside triphosphate hydrolases"/>
    <property type="match status" value="2"/>
</dbReference>
<dbReference type="SUPFAM" id="SSF81767">
    <property type="entry name" value="Pre-protein crosslinking domain of SecA"/>
    <property type="match status" value="1"/>
</dbReference>
<dbReference type="PROSITE" id="PS01312">
    <property type="entry name" value="SECA"/>
    <property type="match status" value="1"/>
</dbReference>
<dbReference type="PROSITE" id="PS51196">
    <property type="entry name" value="SECA_MOTOR_DEAD"/>
    <property type="match status" value="1"/>
</dbReference>